<feature type="chain" id="PRO_0000259613" description="Collagen alpha-1(XXV) chain">
    <location>
        <begin position="1"/>
        <end position="666"/>
    </location>
</feature>
<feature type="chain" id="PRO_0000259614" description="Collagen-like Alzheimer amyloid plaque component" evidence="2">
    <location>
        <begin position="113"/>
        <end position="654"/>
    </location>
</feature>
<feature type="topological domain" description="Cytoplasmic" evidence="3">
    <location>
        <begin position="1"/>
        <end position="33"/>
    </location>
</feature>
<feature type="transmembrane region" description="Helical; Signal-anchor for type II membrane protein" evidence="3">
    <location>
        <begin position="34"/>
        <end position="54"/>
    </location>
</feature>
<feature type="topological domain" description="Extracellular" evidence="3">
    <location>
        <begin position="55"/>
        <end position="666"/>
    </location>
</feature>
<feature type="domain" description="Collagen-like 1" evidence="3">
    <location>
        <begin position="121"/>
        <end position="164"/>
    </location>
</feature>
<feature type="domain" description="Collagen-like 2" evidence="3">
    <location>
        <begin position="192"/>
        <end position="247"/>
    </location>
</feature>
<feature type="domain" description="Collagen-like 3" evidence="3">
    <location>
        <begin position="249"/>
        <end position="308"/>
    </location>
</feature>
<feature type="domain" description="Collagen-like 4" evidence="3">
    <location>
        <begin position="311"/>
        <end position="370"/>
    </location>
</feature>
<feature type="domain" description="Collagen-like 5" evidence="3">
    <location>
        <begin position="373"/>
        <end position="425"/>
    </location>
</feature>
<feature type="domain" description="Collagen-like 6" evidence="3">
    <location>
        <begin position="455"/>
        <end position="514"/>
    </location>
</feature>
<feature type="domain" description="Collagen-like 7" evidence="3">
    <location>
        <begin position="529"/>
        <end position="588"/>
    </location>
</feature>
<feature type="domain" description="Collagen-like 8" evidence="3">
    <location>
        <begin position="589"/>
        <end position="648"/>
    </location>
</feature>
<feature type="region of interest" description="Disordered" evidence="4">
    <location>
        <begin position="1"/>
        <end position="24"/>
    </location>
</feature>
<feature type="region of interest" description="Disordered" evidence="4">
    <location>
        <begin position="116"/>
        <end position="168"/>
    </location>
</feature>
<feature type="region of interest" description="Interaction with amyloid-beta peptide" evidence="2">
    <location>
        <begin position="181"/>
        <end position="188"/>
    </location>
</feature>
<feature type="region of interest" description="Disordered" evidence="4">
    <location>
        <begin position="189"/>
        <end position="428"/>
    </location>
</feature>
<feature type="region of interest" description="Disordered" evidence="4">
    <location>
        <begin position="445"/>
        <end position="666"/>
    </location>
</feature>
<feature type="compositionally biased region" description="Basic and acidic residues" evidence="4">
    <location>
        <begin position="11"/>
        <end position="21"/>
    </location>
</feature>
<feature type="compositionally biased region" description="Pro residues" evidence="4">
    <location>
        <begin position="140"/>
        <end position="151"/>
    </location>
</feature>
<feature type="compositionally biased region" description="Pro residues" evidence="4">
    <location>
        <begin position="196"/>
        <end position="208"/>
    </location>
</feature>
<feature type="compositionally biased region" description="Low complexity" evidence="4">
    <location>
        <begin position="230"/>
        <end position="245"/>
    </location>
</feature>
<feature type="compositionally biased region" description="Basic and acidic residues" evidence="4">
    <location>
        <begin position="280"/>
        <end position="290"/>
    </location>
</feature>
<feature type="compositionally biased region" description="Low complexity" evidence="4">
    <location>
        <begin position="336"/>
        <end position="358"/>
    </location>
</feature>
<feature type="compositionally biased region" description="Basic and acidic residues" evidence="4">
    <location>
        <begin position="361"/>
        <end position="377"/>
    </location>
</feature>
<feature type="compositionally biased region" description="Basic and acidic residues" evidence="4">
    <location>
        <begin position="398"/>
        <end position="407"/>
    </location>
</feature>
<feature type="compositionally biased region" description="Low complexity" evidence="4">
    <location>
        <begin position="457"/>
        <end position="466"/>
    </location>
</feature>
<feature type="compositionally biased region" description="Gly residues" evidence="4">
    <location>
        <begin position="494"/>
        <end position="503"/>
    </location>
</feature>
<feature type="compositionally biased region" description="Pro residues" evidence="4">
    <location>
        <begin position="528"/>
        <end position="543"/>
    </location>
</feature>
<feature type="compositionally biased region" description="Basic and acidic residues" evidence="4">
    <location>
        <begin position="615"/>
        <end position="638"/>
    </location>
</feature>
<feature type="site" description="Cleavage; by furin" evidence="1">
    <location>
        <begin position="112"/>
        <end position="113"/>
    </location>
</feature>
<feature type="sequence conflict" description="In Ref. 1; AAK37475." evidence="6" ref="1">
    <original>A</original>
    <variation>V</variation>
    <location>
        <position position="64"/>
    </location>
</feature>
<feature type="sequence conflict" description="In Ref. 1; AAK37475." evidence="6" ref="1">
    <original>H</original>
    <variation>Y</variation>
    <location>
        <position position="104"/>
    </location>
</feature>
<feature type="sequence conflict" description="In Ref. 1; AAK37475." evidence="6" ref="1">
    <original>A</original>
    <variation>V</variation>
    <location>
        <position position="111"/>
    </location>
</feature>
<comment type="function">
    <text evidence="2">Inhibits fibrillization of amyloid-beta peptide during the elongation phase. Has also been shown to assemble amyloid fibrils into protease-resistant aggregates. Binds heparin (By similarity).</text>
</comment>
<comment type="subunit">
    <text evidence="2">Forms homodimers and homotrimers. Binds to the fibrillized forms of amyloid-beta protein 40 (beta-APP40) and amyloid-betad protein 42 (beta-APP42). Found associated with beta-APP42 more frequently than with beta-APP40 (By similarity).</text>
</comment>
<comment type="subcellular location">
    <subcellularLocation>
        <location evidence="6">Membrane</location>
        <topology evidence="6">Single-pass type II membrane protein</topology>
    </subcellularLocation>
    <text evidence="1">After proteolytic cleavage, CLAC is secreted.</text>
</comment>
<comment type="tissue specificity">
    <text evidence="5">Expressed predominantly in neurons with low levels also detected in heart, testis and eye.</text>
</comment>
<comment type="PTM">
    <text evidence="2">Undergoes proteolytic cleavage by furin protease to yield the soluble collagen-like Alzheimer amyloid plaque component.</text>
</comment>
<comment type="PTM">
    <text evidence="2">Glycosylated.</text>
</comment>
<comment type="PTM">
    <text evidence="2">Hydroxylated on proline and lysine residues.</text>
</comment>
<organism>
    <name type="scientific">Mus musculus</name>
    <name type="common">Mouse</name>
    <dbReference type="NCBI Taxonomy" id="10090"/>
    <lineage>
        <taxon>Eukaryota</taxon>
        <taxon>Metazoa</taxon>
        <taxon>Chordata</taxon>
        <taxon>Craniata</taxon>
        <taxon>Vertebrata</taxon>
        <taxon>Euteleostomi</taxon>
        <taxon>Mammalia</taxon>
        <taxon>Eutheria</taxon>
        <taxon>Euarchontoglires</taxon>
        <taxon>Glires</taxon>
        <taxon>Rodentia</taxon>
        <taxon>Myomorpha</taxon>
        <taxon>Muroidea</taxon>
        <taxon>Muridae</taxon>
        <taxon>Murinae</taxon>
        <taxon>Mus</taxon>
        <taxon>Mus</taxon>
    </lineage>
</organism>
<proteinExistence type="evidence at transcript level"/>
<dbReference type="EMBL" id="AF315290">
    <property type="protein sequence ID" value="AAK37475.1"/>
    <property type="molecule type" value="mRNA"/>
</dbReference>
<dbReference type="EMBL" id="AC091312">
    <property type="status" value="NOT_ANNOTATED_CDS"/>
    <property type="molecule type" value="Genomic_DNA"/>
</dbReference>
<dbReference type="EMBL" id="AC110540">
    <property type="status" value="NOT_ANNOTATED_CDS"/>
    <property type="molecule type" value="Genomic_DNA"/>
</dbReference>
<dbReference type="EMBL" id="AC114642">
    <property type="status" value="NOT_ANNOTATED_CDS"/>
    <property type="molecule type" value="Genomic_DNA"/>
</dbReference>
<dbReference type="EMBL" id="AC164078">
    <property type="status" value="NOT_ANNOTATED_CDS"/>
    <property type="molecule type" value="Genomic_DNA"/>
</dbReference>
<dbReference type="EMBL" id="CH466532">
    <property type="protein sequence ID" value="EDL12220.1"/>
    <property type="molecule type" value="Genomic_DNA"/>
</dbReference>
<dbReference type="CCDS" id="CCDS38637.1"/>
<dbReference type="RefSeq" id="NP_084114.2">
    <property type="nucleotide sequence ID" value="NM_029838.4"/>
</dbReference>
<dbReference type="FunCoup" id="Q99MQ5">
    <property type="interactions" value="154"/>
</dbReference>
<dbReference type="STRING" id="10090.ENSMUSP00000079210"/>
<dbReference type="GlyGen" id="Q99MQ5">
    <property type="glycosylation" value="1 site"/>
</dbReference>
<dbReference type="iPTMnet" id="Q99MQ5"/>
<dbReference type="PhosphoSitePlus" id="Q99MQ5"/>
<dbReference type="PaxDb" id="10090-ENSMUSP00000079210"/>
<dbReference type="ProteomicsDB" id="284082"/>
<dbReference type="Antibodypedia" id="7049">
    <property type="antibodies" value="175 antibodies from 26 providers"/>
</dbReference>
<dbReference type="DNASU" id="77018"/>
<dbReference type="Ensembl" id="ENSMUST00000080335.11">
    <property type="protein sequence ID" value="ENSMUSP00000079210.5"/>
    <property type="gene ID" value="ENSMUSG00000058897.19"/>
</dbReference>
<dbReference type="GeneID" id="77018"/>
<dbReference type="KEGG" id="mmu:77018"/>
<dbReference type="UCSC" id="uc008riz.1">
    <property type="organism name" value="mouse"/>
</dbReference>
<dbReference type="AGR" id="MGI:1924268"/>
<dbReference type="CTD" id="84570"/>
<dbReference type="MGI" id="MGI:1924268">
    <property type="gene designation" value="Col25a1"/>
</dbReference>
<dbReference type="VEuPathDB" id="HostDB:ENSMUSG00000058897"/>
<dbReference type="eggNOG" id="KOG3544">
    <property type="taxonomic scope" value="Eukaryota"/>
</dbReference>
<dbReference type="GeneTree" id="ENSGT00940000159823"/>
<dbReference type="HOGENOM" id="CLU_001074_21_1_1"/>
<dbReference type="InParanoid" id="Q99MQ5"/>
<dbReference type="PhylomeDB" id="Q99MQ5"/>
<dbReference type="TreeFam" id="TF338175"/>
<dbReference type="Reactome" id="R-MMU-1442490">
    <property type="pathway name" value="Collagen degradation"/>
</dbReference>
<dbReference type="Reactome" id="R-MMU-1650814">
    <property type="pathway name" value="Collagen biosynthesis and modifying enzymes"/>
</dbReference>
<dbReference type="Reactome" id="R-MMU-8948216">
    <property type="pathway name" value="Collagen chain trimerization"/>
</dbReference>
<dbReference type="BioGRID-ORCS" id="77018">
    <property type="hits" value="3 hits in 77 CRISPR screens"/>
</dbReference>
<dbReference type="ChiTaRS" id="Col25a1">
    <property type="organism name" value="mouse"/>
</dbReference>
<dbReference type="PRO" id="PR:Q99MQ5"/>
<dbReference type="Proteomes" id="UP000000589">
    <property type="component" value="Chromosome 3"/>
</dbReference>
<dbReference type="RNAct" id="Q99MQ5">
    <property type="molecule type" value="protein"/>
</dbReference>
<dbReference type="Bgee" id="ENSMUSG00000058897">
    <property type="expression patterns" value="Expressed in median eminence of neurohypophysis and 156 other cell types or tissues"/>
</dbReference>
<dbReference type="ExpressionAtlas" id="Q99MQ5">
    <property type="expression patterns" value="baseline and differential"/>
</dbReference>
<dbReference type="GO" id="GO:0005581">
    <property type="term" value="C:collagen trimer"/>
    <property type="evidence" value="ECO:0007669"/>
    <property type="project" value="UniProtKB-KW"/>
</dbReference>
<dbReference type="GO" id="GO:0062023">
    <property type="term" value="C:collagen-containing extracellular matrix"/>
    <property type="evidence" value="ECO:0007005"/>
    <property type="project" value="BHF-UCL"/>
</dbReference>
<dbReference type="GO" id="GO:0005576">
    <property type="term" value="C:extracellular region"/>
    <property type="evidence" value="ECO:0000266"/>
    <property type="project" value="MGI"/>
</dbReference>
<dbReference type="GO" id="GO:0005615">
    <property type="term" value="C:extracellular space"/>
    <property type="evidence" value="ECO:0000250"/>
    <property type="project" value="UniProtKB"/>
</dbReference>
<dbReference type="GO" id="GO:0005886">
    <property type="term" value="C:plasma membrane"/>
    <property type="evidence" value="ECO:0000266"/>
    <property type="project" value="MGI"/>
</dbReference>
<dbReference type="GO" id="GO:0001540">
    <property type="term" value="F:amyloid-beta binding"/>
    <property type="evidence" value="ECO:0000250"/>
    <property type="project" value="UniProtKB"/>
</dbReference>
<dbReference type="GO" id="GO:0008201">
    <property type="term" value="F:heparin binding"/>
    <property type="evidence" value="ECO:0000250"/>
    <property type="project" value="UniProtKB"/>
</dbReference>
<dbReference type="GO" id="GO:0060385">
    <property type="term" value="P:axonogenesis involved in innervation"/>
    <property type="evidence" value="ECO:0000315"/>
    <property type="project" value="MGI"/>
</dbReference>
<dbReference type="InterPro" id="IPR008160">
    <property type="entry name" value="Collagen"/>
</dbReference>
<dbReference type="InterPro" id="IPR050938">
    <property type="entry name" value="Collagen_Structural_Proteins"/>
</dbReference>
<dbReference type="PANTHER" id="PTHR37456:SF3">
    <property type="entry name" value="COLLAGEN ALPHA-1(XXV) CHAIN"/>
    <property type="match status" value="1"/>
</dbReference>
<dbReference type="PANTHER" id="PTHR37456">
    <property type="entry name" value="SI:CH211-266K2.1"/>
    <property type="match status" value="1"/>
</dbReference>
<dbReference type="Pfam" id="PF01391">
    <property type="entry name" value="Collagen"/>
    <property type="match status" value="6"/>
</dbReference>
<accession>Q99MQ5</accession>
<accession>G3X9H6</accession>
<gene>
    <name evidence="8" type="primary">Col25a1</name>
</gene>
<keyword id="KW-0034">Amyloid</keyword>
<keyword id="KW-0176">Collagen</keyword>
<keyword id="KW-0325">Glycoprotein</keyword>
<keyword id="KW-0358">Heparin-binding</keyword>
<keyword id="KW-0379">Hydroxylation</keyword>
<keyword id="KW-0472">Membrane</keyword>
<keyword id="KW-1185">Reference proteome</keyword>
<keyword id="KW-0677">Repeat</keyword>
<keyword id="KW-0735">Signal-anchor</keyword>
<keyword id="KW-0812">Transmembrane</keyword>
<keyword id="KW-1133">Transmembrane helix</keyword>
<protein>
    <recommendedName>
        <fullName>Collagen alpha-1(XXV) chain</fullName>
    </recommendedName>
    <alternativeName>
        <fullName>CLAC-P</fullName>
    </alternativeName>
    <component>
        <recommendedName>
            <fullName>Collagen-like Alzheimer amyloid plaque component</fullName>
            <shortName>CLAC</shortName>
        </recommendedName>
    </component>
</protein>
<name>COPA1_MOUSE</name>
<reference evidence="6 7" key="1">
    <citation type="journal article" date="2002" name="EMBO J.">
        <title>CLAC: a novel Alzheimer amyloid plaque component derived from a transmembrane precursor, CLAC-P/collagen type XXV.</title>
        <authorList>
            <person name="Hashimoto T."/>
            <person name="Wakabayashi T."/>
            <person name="Watanabe A."/>
            <person name="Kowa H."/>
            <person name="Hosoda R."/>
            <person name="Nakamura A."/>
            <person name="Kanazawa I."/>
            <person name="Arai T."/>
            <person name="Takio K."/>
            <person name="Mann D.M.A."/>
            <person name="Iwatsubo T."/>
        </authorList>
    </citation>
    <scope>NUCLEOTIDE SEQUENCE [MRNA]</scope>
    <scope>TISSUE SPECIFICITY</scope>
    <source>
        <strain evidence="7">BALB/cJ</strain>
        <tissue evidence="7">Brain</tissue>
    </source>
</reference>
<reference key="2">
    <citation type="journal article" date="2009" name="PLoS Biol.">
        <title>Lineage-specific biology revealed by a finished genome assembly of the mouse.</title>
        <authorList>
            <person name="Church D.M."/>
            <person name="Goodstadt L."/>
            <person name="Hillier L.W."/>
            <person name="Zody M.C."/>
            <person name="Goldstein S."/>
            <person name="She X."/>
            <person name="Bult C.J."/>
            <person name="Agarwala R."/>
            <person name="Cherry J.L."/>
            <person name="DiCuccio M."/>
            <person name="Hlavina W."/>
            <person name="Kapustin Y."/>
            <person name="Meric P."/>
            <person name="Maglott D."/>
            <person name="Birtle Z."/>
            <person name="Marques A.C."/>
            <person name="Graves T."/>
            <person name="Zhou S."/>
            <person name="Teague B."/>
            <person name="Potamousis K."/>
            <person name="Churas C."/>
            <person name="Place M."/>
            <person name="Herschleb J."/>
            <person name="Runnheim R."/>
            <person name="Forrest D."/>
            <person name="Amos-Landgraf J."/>
            <person name="Schwartz D.C."/>
            <person name="Cheng Z."/>
            <person name="Lindblad-Toh K."/>
            <person name="Eichler E.E."/>
            <person name="Ponting C.P."/>
        </authorList>
    </citation>
    <scope>NUCLEOTIDE SEQUENCE [LARGE SCALE GENOMIC DNA]</scope>
    <source>
        <strain>C57BL/6J</strain>
    </source>
</reference>
<reference key="3">
    <citation type="submission" date="2005-07" db="EMBL/GenBank/DDBJ databases">
        <authorList>
            <person name="Mural R.J."/>
            <person name="Adams M.D."/>
            <person name="Myers E.W."/>
            <person name="Smith H.O."/>
            <person name="Venter J.C."/>
        </authorList>
    </citation>
    <scope>NUCLEOTIDE SEQUENCE [LARGE SCALE GENOMIC DNA]</scope>
</reference>
<evidence type="ECO:0000250" key="1"/>
<evidence type="ECO:0000250" key="2">
    <source>
        <dbReference type="UniProtKB" id="Q9BXS0"/>
    </source>
</evidence>
<evidence type="ECO:0000255" key="3"/>
<evidence type="ECO:0000256" key="4">
    <source>
        <dbReference type="SAM" id="MobiDB-lite"/>
    </source>
</evidence>
<evidence type="ECO:0000269" key="5">
    <source>
    </source>
</evidence>
<evidence type="ECO:0000305" key="6"/>
<evidence type="ECO:0000312" key="7">
    <source>
        <dbReference type="EMBL" id="AAK37475.1"/>
    </source>
</evidence>
<evidence type="ECO:0000312" key="8">
    <source>
        <dbReference type="MGI" id="MGI:1924268"/>
    </source>
</evidence>
<sequence length="666" mass="65377">MLVKKLAGKGGGRESGSEDPRPLGQRCAGTMPSCTALATLLSVVAVAFCFYLGVKTNDLQARIAALESAKGTPSFHPLSDTVDELKAMVQEKVERLLAQKSYEHMAKIRTAREAPLECNCPAGPPGKRGKRGRRGESGPPGQPGPQGPPGPKGDKGEQGDQGPRMVFPKINHGFLSADQQLIKRRLIKGDQGQAGPPGPPGPPGPRGPPGDTGKDGPRGMPGVPGEPGKPGEQGLMGPLGPPGQKGSIGAPGTPGMDGQKGEPGSPGAAGQSGLPGPKGEPGKEGEKGDAGENGPKGDTGEKGDPGSSAAGIKGEPGESGRPGQKGEPGLPGLPGLPGIKGEPGFIGPQGEPGLPGLPGTKGDRGEAGPPGRGERGDPGAPGPKGKQGESGARGPKGSKGDRGDKGDSGALGPRGPPGQKGDPGATEIIDYNGNLHEALQRITTLTVTGPPGPPGPQGLQGPKGEQGSPGIPGVDGEQGLKGSKGDMGDPGVPGEKGGLGLPGLPGANGVKGEKGDTGLPGPQGPSIIGPPGPPGPHGPPGPMGPHGLPGPKGASGLDGKPGSRGADGPIGPHGPAGPKGERGEKGAMGEPGPRGPYGLPGKDGEPGLDGFPGPRGEKGDLGEKGEKGFRGVKGEKGEPGQPGLDGLDAPCQLGPDGLPMPGCWQK</sequence>